<evidence type="ECO:0000255" key="1">
    <source>
        <dbReference type="PROSITE-ProRule" id="PRU00691"/>
    </source>
</evidence>
<evidence type="ECO:0000305" key="2"/>
<keyword id="KW-1015">Disulfide bond</keyword>
<keyword id="KW-0535">Nitrogen fixation</keyword>
<keyword id="KW-0676">Redox-active center</keyword>
<gene>
    <name type="primary">fixW</name>
</gene>
<reference key="1">
    <citation type="journal article" date="1989" name="Mol. Gen. Genet.">
        <title>Characterization and nucleotide sequence of a novel gene fixW upstream of the fixABC operon in Rhizobium leguminosarum.</title>
        <authorList>
            <person name="Hontelez J.G.J."/>
            <person name="Lankhorst R.K."/>
            <person name="Katinakis P."/>
            <person name="van den Bos R.C."/>
            <person name="van Kammen A."/>
        </authorList>
    </citation>
    <scope>NUCLEOTIDE SEQUENCE [GENOMIC DNA]</scope>
</reference>
<sequence>MASSLNLGSPAPPIKVQNWLRGDPLSNFQLGKIYVVEFFSIYCGYCAPELSDLAKLHKKFIDTRVEFIGIAASEEAATADDARAQVDASITKSLPNTNIRMGFDHSGEMDEDWLKASLSFHVPKTFVVDRDGSIAFIGDLVMLQDVLPKVIDGNWRASGKQRMPKRSGLLKARLMLRRLFHDRVSAAIEIKNWKAPLSAIEEGINLNPDSIFLRRNLYWHE</sequence>
<dbReference type="EMBL" id="X16521">
    <property type="protein sequence ID" value="CAA34528.1"/>
    <property type="molecule type" value="Genomic_DNA"/>
</dbReference>
<dbReference type="PIR" id="JQ0313">
    <property type="entry name" value="JQ0313"/>
</dbReference>
<dbReference type="SMR" id="P14312"/>
<dbReference type="GO" id="GO:0016209">
    <property type="term" value="F:antioxidant activity"/>
    <property type="evidence" value="ECO:0007669"/>
    <property type="project" value="InterPro"/>
</dbReference>
<dbReference type="GO" id="GO:0015036">
    <property type="term" value="F:disulfide oxidoreductase activity"/>
    <property type="evidence" value="ECO:0007669"/>
    <property type="project" value="UniProtKB-ARBA"/>
</dbReference>
<dbReference type="GO" id="GO:0009399">
    <property type="term" value="P:nitrogen fixation"/>
    <property type="evidence" value="ECO:0007669"/>
    <property type="project" value="UniProtKB-KW"/>
</dbReference>
<dbReference type="CDD" id="cd02966">
    <property type="entry name" value="TlpA_like_family"/>
    <property type="match status" value="1"/>
</dbReference>
<dbReference type="Gene3D" id="3.40.30.10">
    <property type="entry name" value="Glutaredoxin"/>
    <property type="match status" value="1"/>
</dbReference>
<dbReference type="InterPro" id="IPR000866">
    <property type="entry name" value="AhpC/TSA"/>
</dbReference>
<dbReference type="InterPro" id="IPR036249">
    <property type="entry name" value="Thioredoxin-like_sf"/>
</dbReference>
<dbReference type="InterPro" id="IPR017937">
    <property type="entry name" value="Thioredoxin_CS"/>
</dbReference>
<dbReference type="InterPro" id="IPR013766">
    <property type="entry name" value="Thioredoxin_domain"/>
</dbReference>
<dbReference type="InterPro" id="IPR050553">
    <property type="entry name" value="Thioredoxin_ResA/DsbE_sf"/>
</dbReference>
<dbReference type="PANTHER" id="PTHR42852:SF13">
    <property type="entry name" value="PROTEIN DIPZ"/>
    <property type="match status" value="1"/>
</dbReference>
<dbReference type="PANTHER" id="PTHR42852">
    <property type="entry name" value="THIOL:DISULFIDE INTERCHANGE PROTEIN DSBE"/>
    <property type="match status" value="1"/>
</dbReference>
<dbReference type="Pfam" id="PF00578">
    <property type="entry name" value="AhpC-TSA"/>
    <property type="match status" value="1"/>
</dbReference>
<dbReference type="SUPFAM" id="SSF52833">
    <property type="entry name" value="Thioredoxin-like"/>
    <property type="match status" value="1"/>
</dbReference>
<dbReference type="PROSITE" id="PS00194">
    <property type="entry name" value="THIOREDOXIN_1"/>
    <property type="match status" value="1"/>
</dbReference>
<dbReference type="PROSITE" id="PS51352">
    <property type="entry name" value="THIOREDOXIN_2"/>
    <property type="match status" value="1"/>
</dbReference>
<organism>
    <name type="scientific">Rhizobium leguminosarum</name>
    <dbReference type="NCBI Taxonomy" id="384"/>
    <lineage>
        <taxon>Bacteria</taxon>
        <taxon>Pseudomonadati</taxon>
        <taxon>Pseudomonadota</taxon>
        <taxon>Alphaproteobacteria</taxon>
        <taxon>Hyphomicrobiales</taxon>
        <taxon>Rhizobiaceae</taxon>
        <taxon>Rhizobium/Agrobacterium group</taxon>
        <taxon>Rhizobium</taxon>
    </lineage>
</organism>
<name>FIXW_RHILE</name>
<comment type="similarity">
    <text evidence="2">Belongs to the thioredoxin family.</text>
</comment>
<accession>P14312</accession>
<feature type="chain" id="PRO_0000120181" description="Protein FixW">
    <location>
        <begin position="1"/>
        <end position="221"/>
    </location>
</feature>
<feature type="domain" description="Thioredoxin" evidence="1">
    <location>
        <begin position="5"/>
        <end position="156"/>
    </location>
</feature>
<feature type="disulfide bond" description="Redox-active" evidence="1">
    <location>
        <begin position="43"/>
        <end position="46"/>
    </location>
</feature>
<proteinExistence type="inferred from homology"/>
<protein>
    <recommendedName>
        <fullName>Protein FixW</fullName>
    </recommendedName>
</protein>